<protein>
    <recommendedName>
        <fullName>Bacterial non-heme ferritin</fullName>
        <ecNumber>1.16.3.2</ecNumber>
    </recommendedName>
</protein>
<accession>Q49YT7</accession>
<gene>
    <name type="primary">ftnA</name>
    <name type="ordered locus">SSP0898</name>
</gene>
<sequence>MLNKELLDALNEQMNHEFYAAHAYMAMAAFCDDNSYEGFANFYIQQAKEERFHGKKIYDYINDRGEHALFTAIPAPKTEFSSILETFEDGLAQEQDVTHRFYNLSDLANKDKDYATISFLNWFLDEQVEEEAMFETHIDYLNRIGDDSNTLYLYEKELAARSFDESE</sequence>
<comment type="function">
    <text evidence="1">Iron-storage protein.</text>
</comment>
<comment type="catalytic activity">
    <reaction>
        <text>4 Fe(2+) + O2 + 6 H2O = 4 iron(III) oxide-hydroxide + 12 H(+)</text>
        <dbReference type="Rhea" id="RHEA:11972"/>
        <dbReference type="ChEBI" id="CHEBI:15377"/>
        <dbReference type="ChEBI" id="CHEBI:15378"/>
        <dbReference type="ChEBI" id="CHEBI:15379"/>
        <dbReference type="ChEBI" id="CHEBI:29033"/>
        <dbReference type="ChEBI" id="CHEBI:78619"/>
        <dbReference type="EC" id="1.16.3.2"/>
    </reaction>
</comment>
<comment type="subcellular location">
    <subcellularLocation>
        <location evidence="1">Cytoplasm</location>
    </subcellularLocation>
</comment>
<comment type="similarity">
    <text evidence="3">Belongs to the ferritin family. Prokaryotic subfamily.</text>
</comment>
<dbReference type="EC" id="1.16.3.2"/>
<dbReference type="EMBL" id="AP008934">
    <property type="protein sequence ID" value="BAE18043.1"/>
    <property type="molecule type" value="Genomic_DNA"/>
</dbReference>
<dbReference type="RefSeq" id="WP_011302773.1">
    <property type="nucleotide sequence ID" value="NZ_MTGA01000031.1"/>
</dbReference>
<dbReference type="SMR" id="Q49YT7"/>
<dbReference type="GeneID" id="3616801"/>
<dbReference type="KEGG" id="ssp:SSP0898"/>
<dbReference type="PATRIC" id="fig|342451.11.peg.897"/>
<dbReference type="eggNOG" id="COG1528">
    <property type="taxonomic scope" value="Bacteria"/>
</dbReference>
<dbReference type="HOGENOM" id="CLU_065681_1_2_9"/>
<dbReference type="OrthoDB" id="9801481at2"/>
<dbReference type="Proteomes" id="UP000006371">
    <property type="component" value="Chromosome"/>
</dbReference>
<dbReference type="GO" id="GO:0005829">
    <property type="term" value="C:cytosol"/>
    <property type="evidence" value="ECO:0007669"/>
    <property type="project" value="TreeGrafter"/>
</dbReference>
<dbReference type="GO" id="GO:0008199">
    <property type="term" value="F:ferric iron binding"/>
    <property type="evidence" value="ECO:0007669"/>
    <property type="project" value="InterPro"/>
</dbReference>
<dbReference type="GO" id="GO:0008198">
    <property type="term" value="F:ferrous iron binding"/>
    <property type="evidence" value="ECO:0007669"/>
    <property type="project" value="TreeGrafter"/>
</dbReference>
<dbReference type="GO" id="GO:0004322">
    <property type="term" value="F:ferroxidase activity"/>
    <property type="evidence" value="ECO:0007669"/>
    <property type="project" value="TreeGrafter"/>
</dbReference>
<dbReference type="GO" id="GO:0006879">
    <property type="term" value="P:intracellular iron ion homeostasis"/>
    <property type="evidence" value="ECO:0007669"/>
    <property type="project" value="UniProtKB-KW"/>
</dbReference>
<dbReference type="GO" id="GO:0006826">
    <property type="term" value="P:iron ion transport"/>
    <property type="evidence" value="ECO:0007669"/>
    <property type="project" value="InterPro"/>
</dbReference>
<dbReference type="CDD" id="cd01055">
    <property type="entry name" value="Nonheme_Ferritin"/>
    <property type="match status" value="1"/>
</dbReference>
<dbReference type="FunFam" id="1.20.1260.10:FF:000001">
    <property type="entry name" value="Non-heme ferritin"/>
    <property type="match status" value="1"/>
</dbReference>
<dbReference type="Gene3D" id="1.20.1260.10">
    <property type="match status" value="1"/>
</dbReference>
<dbReference type="InterPro" id="IPR001519">
    <property type="entry name" value="Ferritin"/>
</dbReference>
<dbReference type="InterPro" id="IPR012347">
    <property type="entry name" value="Ferritin-like"/>
</dbReference>
<dbReference type="InterPro" id="IPR009040">
    <property type="entry name" value="Ferritin-like_diiron"/>
</dbReference>
<dbReference type="InterPro" id="IPR009078">
    <property type="entry name" value="Ferritin-like_SF"/>
</dbReference>
<dbReference type="InterPro" id="IPR008331">
    <property type="entry name" value="Ferritin_DPS_dom"/>
</dbReference>
<dbReference type="InterPro" id="IPR041719">
    <property type="entry name" value="Ferritin_prok"/>
</dbReference>
<dbReference type="PANTHER" id="PTHR11431:SF127">
    <property type="entry name" value="BACTERIAL NON-HEME FERRITIN"/>
    <property type="match status" value="1"/>
</dbReference>
<dbReference type="PANTHER" id="PTHR11431">
    <property type="entry name" value="FERRITIN"/>
    <property type="match status" value="1"/>
</dbReference>
<dbReference type="Pfam" id="PF00210">
    <property type="entry name" value="Ferritin"/>
    <property type="match status" value="1"/>
</dbReference>
<dbReference type="SUPFAM" id="SSF47240">
    <property type="entry name" value="Ferritin-like"/>
    <property type="match status" value="1"/>
</dbReference>
<dbReference type="PROSITE" id="PS50905">
    <property type="entry name" value="FERRITIN_LIKE"/>
    <property type="match status" value="1"/>
</dbReference>
<organism>
    <name type="scientific">Staphylococcus saprophyticus subsp. saprophyticus (strain ATCC 15305 / DSM 20229 / NCIMB 8711 / NCTC 7292 / S-41)</name>
    <dbReference type="NCBI Taxonomy" id="342451"/>
    <lineage>
        <taxon>Bacteria</taxon>
        <taxon>Bacillati</taxon>
        <taxon>Bacillota</taxon>
        <taxon>Bacilli</taxon>
        <taxon>Bacillales</taxon>
        <taxon>Staphylococcaceae</taxon>
        <taxon>Staphylococcus</taxon>
    </lineage>
</organism>
<name>FTN_STAS1</name>
<proteinExistence type="inferred from homology"/>
<evidence type="ECO:0000250" key="1"/>
<evidence type="ECO:0000255" key="2">
    <source>
        <dbReference type="PROSITE-ProRule" id="PRU00085"/>
    </source>
</evidence>
<evidence type="ECO:0000305" key="3"/>
<keyword id="KW-0963">Cytoplasm</keyword>
<keyword id="KW-0408">Iron</keyword>
<keyword id="KW-0409">Iron storage</keyword>
<keyword id="KW-0479">Metal-binding</keyword>
<keyword id="KW-0560">Oxidoreductase</keyword>
<keyword id="KW-1185">Reference proteome</keyword>
<feature type="initiator methionine" description="Removed" evidence="1">
    <location>
        <position position="1"/>
    </location>
</feature>
<feature type="chain" id="PRO_0000298974" description="Bacterial non-heme ferritin">
    <location>
        <begin position="2"/>
        <end position="167"/>
    </location>
</feature>
<feature type="domain" description="Ferritin-like diiron" evidence="2">
    <location>
        <begin position="2"/>
        <end position="145"/>
    </location>
</feature>
<feature type="binding site" evidence="2">
    <location>
        <position position="17"/>
    </location>
    <ligand>
        <name>Fe cation</name>
        <dbReference type="ChEBI" id="CHEBI:24875"/>
        <label>1</label>
    </ligand>
</feature>
<feature type="binding site" evidence="2">
    <location>
        <position position="50"/>
    </location>
    <ligand>
        <name>Fe cation</name>
        <dbReference type="ChEBI" id="CHEBI:24875"/>
        <label>1</label>
    </ligand>
</feature>
<feature type="binding site" evidence="2">
    <location>
        <position position="50"/>
    </location>
    <ligand>
        <name>Fe cation</name>
        <dbReference type="ChEBI" id="CHEBI:24875"/>
        <label>2</label>
    </ligand>
</feature>
<feature type="binding site" evidence="2">
    <location>
        <position position="53"/>
    </location>
    <ligand>
        <name>Fe cation</name>
        <dbReference type="ChEBI" id="CHEBI:24875"/>
        <label>1</label>
    </ligand>
</feature>
<feature type="binding site" evidence="2">
    <location>
        <position position="94"/>
    </location>
    <ligand>
        <name>Fe cation</name>
        <dbReference type="ChEBI" id="CHEBI:24875"/>
        <label>2</label>
    </ligand>
</feature>
<feature type="binding site" evidence="2">
    <location>
        <position position="127"/>
    </location>
    <ligand>
        <name>Fe cation</name>
        <dbReference type="ChEBI" id="CHEBI:24875"/>
        <label>2</label>
    </ligand>
</feature>
<reference key="1">
    <citation type="journal article" date="2005" name="Proc. Natl. Acad. Sci. U.S.A.">
        <title>Whole genome sequence of Staphylococcus saprophyticus reveals the pathogenesis of uncomplicated urinary tract infection.</title>
        <authorList>
            <person name="Kuroda M."/>
            <person name="Yamashita A."/>
            <person name="Hirakawa H."/>
            <person name="Kumano M."/>
            <person name="Morikawa K."/>
            <person name="Higashide M."/>
            <person name="Maruyama A."/>
            <person name="Inose Y."/>
            <person name="Matoba K."/>
            <person name="Toh H."/>
            <person name="Kuhara S."/>
            <person name="Hattori M."/>
            <person name="Ohta T."/>
        </authorList>
    </citation>
    <scope>NUCLEOTIDE SEQUENCE [LARGE SCALE GENOMIC DNA]</scope>
    <source>
        <strain>ATCC 15305 / DSM 20229 / NCIMB 8711 / NCTC 7292 / S-41</strain>
    </source>
</reference>